<evidence type="ECO:0000255" key="1">
    <source>
        <dbReference type="HAMAP-Rule" id="MF_00127"/>
    </source>
</evidence>
<name>SYH_PHYMT</name>
<keyword id="KW-0030">Aminoacyl-tRNA synthetase</keyword>
<keyword id="KW-0067">ATP-binding</keyword>
<keyword id="KW-0963">Cytoplasm</keyword>
<keyword id="KW-0436">Ligase</keyword>
<keyword id="KW-0547">Nucleotide-binding</keyword>
<keyword id="KW-0648">Protein biosynthesis</keyword>
<keyword id="KW-1185">Reference proteome</keyword>
<reference key="1">
    <citation type="journal article" date="2008" name="BMC Genomics">
        <title>The linear chromosome of the plant-pathogenic mycoplasma 'Candidatus Phytoplasma mali'.</title>
        <authorList>
            <person name="Kube M."/>
            <person name="Schneider B."/>
            <person name="Kuhl H."/>
            <person name="Dandekar T."/>
            <person name="Heitmann K."/>
            <person name="Migdoll A.M."/>
            <person name="Reinhardt R."/>
            <person name="Seemueller E."/>
        </authorList>
    </citation>
    <scope>NUCLEOTIDE SEQUENCE [LARGE SCALE GENOMIC DNA]</scope>
    <source>
        <strain>AT</strain>
    </source>
</reference>
<dbReference type="EC" id="6.1.1.21" evidence="1"/>
<dbReference type="EMBL" id="CU469464">
    <property type="protein sequence ID" value="CAP18457.1"/>
    <property type="molecule type" value="Genomic_DNA"/>
</dbReference>
<dbReference type="SMR" id="B3QZS0"/>
<dbReference type="STRING" id="37692.ATP_00270"/>
<dbReference type="KEGG" id="pml:ATP_00270"/>
<dbReference type="eggNOG" id="COG0124">
    <property type="taxonomic scope" value="Bacteria"/>
</dbReference>
<dbReference type="HOGENOM" id="CLU_025113_1_1_14"/>
<dbReference type="Proteomes" id="UP000002020">
    <property type="component" value="Chromosome"/>
</dbReference>
<dbReference type="GO" id="GO:0005737">
    <property type="term" value="C:cytoplasm"/>
    <property type="evidence" value="ECO:0007669"/>
    <property type="project" value="UniProtKB-SubCell"/>
</dbReference>
<dbReference type="GO" id="GO:0005524">
    <property type="term" value="F:ATP binding"/>
    <property type="evidence" value="ECO:0007669"/>
    <property type="project" value="UniProtKB-UniRule"/>
</dbReference>
<dbReference type="GO" id="GO:0004821">
    <property type="term" value="F:histidine-tRNA ligase activity"/>
    <property type="evidence" value="ECO:0007669"/>
    <property type="project" value="UniProtKB-UniRule"/>
</dbReference>
<dbReference type="GO" id="GO:0006427">
    <property type="term" value="P:histidyl-tRNA aminoacylation"/>
    <property type="evidence" value="ECO:0007669"/>
    <property type="project" value="UniProtKB-UniRule"/>
</dbReference>
<dbReference type="CDD" id="cd00773">
    <property type="entry name" value="HisRS-like_core"/>
    <property type="match status" value="1"/>
</dbReference>
<dbReference type="Gene3D" id="3.40.50.800">
    <property type="entry name" value="Anticodon-binding domain"/>
    <property type="match status" value="1"/>
</dbReference>
<dbReference type="Gene3D" id="3.30.930.10">
    <property type="entry name" value="Bira Bifunctional Protein, Domain 2"/>
    <property type="match status" value="1"/>
</dbReference>
<dbReference type="HAMAP" id="MF_00127">
    <property type="entry name" value="His_tRNA_synth"/>
    <property type="match status" value="1"/>
</dbReference>
<dbReference type="InterPro" id="IPR006195">
    <property type="entry name" value="aa-tRNA-synth_II"/>
</dbReference>
<dbReference type="InterPro" id="IPR045864">
    <property type="entry name" value="aa-tRNA-synth_II/BPL/LPL"/>
</dbReference>
<dbReference type="InterPro" id="IPR004154">
    <property type="entry name" value="Anticodon-bd"/>
</dbReference>
<dbReference type="InterPro" id="IPR036621">
    <property type="entry name" value="Anticodon-bd_dom_sf"/>
</dbReference>
<dbReference type="InterPro" id="IPR015807">
    <property type="entry name" value="His-tRNA-ligase"/>
</dbReference>
<dbReference type="InterPro" id="IPR041715">
    <property type="entry name" value="HisRS-like_core"/>
</dbReference>
<dbReference type="InterPro" id="IPR004516">
    <property type="entry name" value="HisRS/HisZ"/>
</dbReference>
<dbReference type="NCBIfam" id="TIGR00442">
    <property type="entry name" value="hisS"/>
    <property type="match status" value="1"/>
</dbReference>
<dbReference type="PANTHER" id="PTHR43707:SF1">
    <property type="entry name" value="HISTIDINE--TRNA LIGASE, MITOCHONDRIAL-RELATED"/>
    <property type="match status" value="1"/>
</dbReference>
<dbReference type="PANTHER" id="PTHR43707">
    <property type="entry name" value="HISTIDYL-TRNA SYNTHETASE"/>
    <property type="match status" value="1"/>
</dbReference>
<dbReference type="Pfam" id="PF03129">
    <property type="entry name" value="HGTP_anticodon"/>
    <property type="match status" value="1"/>
</dbReference>
<dbReference type="Pfam" id="PF13393">
    <property type="entry name" value="tRNA-synt_His"/>
    <property type="match status" value="1"/>
</dbReference>
<dbReference type="PIRSF" id="PIRSF001549">
    <property type="entry name" value="His-tRNA_synth"/>
    <property type="match status" value="1"/>
</dbReference>
<dbReference type="SUPFAM" id="SSF52954">
    <property type="entry name" value="Class II aaRS ABD-related"/>
    <property type="match status" value="1"/>
</dbReference>
<dbReference type="SUPFAM" id="SSF55681">
    <property type="entry name" value="Class II aaRS and biotin synthetases"/>
    <property type="match status" value="1"/>
</dbReference>
<dbReference type="PROSITE" id="PS50862">
    <property type="entry name" value="AA_TRNA_LIGASE_II"/>
    <property type="match status" value="1"/>
</dbReference>
<accession>B3QZS0</accession>
<gene>
    <name evidence="1" type="primary">hisS</name>
    <name type="ordered locus">ATP_00270</name>
</gene>
<comment type="catalytic activity">
    <reaction evidence="1">
        <text>tRNA(His) + L-histidine + ATP = L-histidyl-tRNA(His) + AMP + diphosphate + H(+)</text>
        <dbReference type="Rhea" id="RHEA:17313"/>
        <dbReference type="Rhea" id="RHEA-COMP:9665"/>
        <dbReference type="Rhea" id="RHEA-COMP:9689"/>
        <dbReference type="ChEBI" id="CHEBI:15378"/>
        <dbReference type="ChEBI" id="CHEBI:30616"/>
        <dbReference type="ChEBI" id="CHEBI:33019"/>
        <dbReference type="ChEBI" id="CHEBI:57595"/>
        <dbReference type="ChEBI" id="CHEBI:78442"/>
        <dbReference type="ChEBI" id="CHEBI:78527"/>
        <dbReference type="ChEBI" id="CHEBI:456215"/>
        <dbReference type="EC" id="6.1.1.21"/>
    </reaction>
</comment>
<comment type="subunit">
    <text evidence="1">Homodimer.</text>
</comment>
<comment type="subcellular location">
    <subcellularLocation>
        <location evidence="1">Cytoplasm</location>
    </subcellularLocation>
</comment>
<comment type="similarity">
    <text evidence="1">Belongs to the class-II aminoacyl-tRNA synthetase family.</text>
</comment>
<sequence>MIIKKPKGTYDLLFDEISQWQELEKKVKFFFENYNYLEIRTPIIEYNEIFNRTATHSDMVNKEIYNFYDKKGRLIALRPEGTAGVVRSYIENKLDFNENLNKFYYLGSFFRYERPQKGRYRQFHQIGVEVLGDNTPFLDLEVIATVSEMLIFLGLKDFKIIINTLGDESSYKKYIKVFNDYIKKQDIFLCSLCKERLKKNSLRILDCKTCAQKNFLKSVPLITDYLNDFSKQRFDSVIKGLKFMKINFQICPHLVRGLDYYNHTVFEIILNSDSIGKRNSLGGGGCYDRLVEILGGHKTSGIGFALGTERLISVLKKYDLLEYSNNNQIDVYFLFLDSKLFFKSLFLVNQLRNAGIKTEINYRFLPFLKQLKKALKYNPKYFVILGEKEDKNNEISIKNTINQNQKKLSQLEMIKFLKKELDL</sequence>
<protein>
    <recommendedName>
        <fullName evidence="1">Histidine--tRNA ligase</fullName>
        <ecNumber evidence="1">6.1.1.21</ecNumber>
    </recommendedName>
    <alternativeName>
        <fullName evidence="1">Histidyl-tRNA synthetase</fullName>
        <shortName evidence="1">HisRS</shortName>
    </alternativeName>
</protein>
<feature type="chain" id="PRO_1000199145" description="Histidine--tRNA ligase">
    <location>
        <begin position="1"/>
        <end position="423"/>
    </location>
</feature>
<organism>
    <name type="scientific">Phytoplasma mali (strain AT)</name>
    <dbReference type="NCBI Taxonomy" id="482235"/>
    <lineage>
        <taxon>Bacteria</taxon>
        <taxon>Bacillati</taxon>
        <taxon>Mycoplasmatota</taxon>
        <taxon>Mollicutes</taxon>
        <taxon>Acholeplasmatales</taxon>
        <taxon>Acholeplasmataceae</taxon>
        <taxon>Candidatus Phytoplasma</taxon>
        <taxon>16SrX (Apple proliferation group)</taxon>
    </lineage>
</organism>
<proteinExistence type="inferred from homology"/>